<name>GLBL2_HUMAN</name>
<comment type="interaction">
    <interactant intactId="EBI-11954377">
        <id>Q8IW92</id>
    </interactant>
    <interactant intactId="EBI-1383687">
        <id>Q9UQM7</id>
        <label>CAMK2A</label>
    </interactant>
    <organismsDiffer>false</organismsDiffer>
    <experiments>3</experiments>
</comment>
<comment type="interaction">
    <interactant intactId="EBI-11954377">
        <id>Q8IW92</id>
    </interactant>
    <interactant intactId="EBI-3867333">
        <id>A8MQ03</id>
        <label>CYSRT1</label>
    </interactant>
    <organismsDiffer>false</organismsDiffer>
    <experiments>3</experiments>
</comment>
<comment type="subcellular location">
    <subcellularLocation>
        <location evidence="3">Secreted</location>
    </subcellularLocation>
</comment>
<comment type="similarity">
    <text evidence="3">Belongs to the glycosyl hydrolase 35 family.</text>
</comment>
<comment type="sequence caution" evidence="3">
    <conflict type="erroneous initiation">
        <sequence resource="EMBL-CDS" id="AAQ13636"/>
    </conflict>
</comment>
<comment type="sequence caution" evidence="3">
    <conflict type="erroneous initiation">
        <sequence resource="EMBL-CDS" id="BAC11149"/>
    </conflict>
</comment>
<sequence length="636" mass="72079">MTTWSLRRRPARTLGLLLLVVLGFLVLRRLDWSTLVPLRLRHRQLGLQAKGWNFMLEDSTFWIFGGSIHYFRVPREYWRDRLLKMKACGLNTLTTYVPWNLHEPERGKFDFSGNLDLEAFVLMAAEIGLWVILRPGPYICSEMDLGGLPSWLLQDPGMRLRTTYKGFTEAVDLYFDHLMSRVVPLQYKRGGPIIAVQVENEYGSYNKDPAYMPYVKKALEDRGIVELLLTSDNKDGLSKGIVQGVLATINLQSTHELQLLTTFLFNVQGTQPKMVMEYWTGWFDSWGGPHNILDSSEVLKTVSAIVDAGSSINLYMFHGGTNFGFMNGAMHFHDYKSDVTSYDYDAVLTEAGDYTAKYMKLRDFFGSISGIPLPPPPDLLPKMPYEPLTPVLYLSLWDALKYLGEPIKSEKPINMENLPVNGGNGQSFGYILYETSITSSGILSGHVHDRGQVFVNTVSIGFLDYKTTKIAVPLIQGYTVLRILVENRGRVNYGENIDDQRKGLIGNLYLNDSPLKNFRIYSLDMKKSFFQRFGLDKWSSLPETPTLPAFFLGSLSISSTPCDTFLKLEGWEKGVVFINGQNLGRYWNIGPQKTLYLPGPWLSSGINQVIVFEETMAGPALQFTETPHLGRNQYIK</sequence>
<feature type="signal peptide" evidence="2">
    <location>
        <begin position="1"/>
        <end position="32"/>
    </location>
</feature>
<feature type="chain" id="PRO_0000317513" description="Beta-galactosidase-1-like protein 2">
    <location>
        <begin position="33"/>
        <end position="636"/>
    </location>
</feature>
<feature type="active site" description="Proton donor" evidence="1">
    <location>
        <position position="201"/>
    </location>
</feature>
<feature type="active site" description="Nucleophile" evidence="1">
    <location>
        <position position="277"/>
    </location>
</feature>
<feature type="sequence conflict" description="In Ref. 2; BAC11309." evidence="3" ref="2">
    <original>K</original>
    <variation>M</variation>
    <location>
        <position position="50"/>
    </location>
</feature>
<feature type="sequence conflict" description="In Ref. 2; BAC11309." evidence="3" ref="2">
    <original>L</original>
    <variation>Q</variation>
    <location>
        <position position="117"/>
    </location>
</feature>
<feature type="sequence conflict" description="In Ref. 3; BAC11247." evidence="3" ref="3">
    <original>H</original>
    <variation>R</variation>
    <location>
        <position position="448"/>
    </location>
</feature>
<dbReference type="EC" id="3.2.1.-"/>
<dbReference type="EMBL" id="AY358497">
    <property type="protein sequence ID" value="AAQ88861.1"/>
    <property type="molecule type" value="mRNA"/>
</dbReference>
<dbReference type="EMBL" id="AK074703">
    <property type="protein sequence ID" value="BAC11149.1"/>
    <property type="status" value="ALT_INIT"/>
    <property type="molecule type" value="mRNA"/>
</dbReference>
<dbReference type="EMBL" id="AK074947">
    <property type="protein sequence ID" value="BAC11309.1"/>
    <property type="molecule type" value="mRNA"/>
</dbReference>
<dbReference type="EMBL" id="AK074855">
    <property type="protein sequence ID" value="BAC11247.1"/>
    <property type="molecule type" value="mRNA"/>
</dbReference>
<dbReference type="EMBL" id="AP003971">
    <property type="status" value="NOT_ANNOTATED_CDS"/>
    <property type="molecule type" value="Genomic_DNA"/>
</dbReference>
<dbReference type="EMBL" id="CH471065">
    <property type="protein sequence ID" value="EAW67843.1"/>
    <property type="molecule type" value="Genomic_DNA"/>
</dbReference>
<dbReference type="EMBL" id="BC008326">
    <property type="protein sequence ID" value="AAH08326.1"/>
    <property type="molecule type" value="mRNA"/>
</dbReference>
<dbReference type="EMBL" id="BC040641">
    <property type="protein sequence ID" value="AAH40641.1"/>
    <property type="molecule type" value="mRNA"/>
</dbReference>
<dbReference type="EMBL" id="AF173889">
    <property type="protein sequence ID" value="AAQ13636.1"/>
    <property type="status" value="ALT_INIT"/>
    <property type="molecule type" value="mRNA"/>
</dbReference>
<dbReference type="CCDS" id="CCDS31724.1"/>
<dbReference type="RefSeq" id="NP_001357390.1">
    <property type="nucleotide sequence ID" value="NM_001370461.1"/>
</dbReference>
<dbReference type="RefSeq" id="NP_612351.2">
    <property type="nucleotide sequence ID" value="NM_138342.3"/>
</dbReference>
<dbReference type="RefSeq" id="XP_006719000.1">
    <property type="nucleotide sequence ID" value="XM_006718937.1"/>
</dbReference>
<dbReference type="SMR" id="Q8IW92"/>
<dbReference type="BioGRID" id="124647">
    <property type="interactions" value="84"/>
</dbReference>
<dbReference type="FunCoup" id="Q8IW92">
    <property type="interactions" value="559"/>
</dbReference>
<dbReference type="IntAct" id="Q8IW92">
    <property type="interactions" value="52"/>
</dbReference>
<dbReference type="STRING" id="9606.ENSP00000444628"/>
<dbReference type="CAZy" id="GH35">
    <property type="family name" value="Glycoside Hydrolase Family 35"/>
</dbReference>
<dbReference type="iPTMnet" id="Q8IW92"/>
<dbReference type="PhosphoSitePlus" id="Q8IW92"/>
<dbReference type="BioMuta" id="GLB1L2"/>
<dbReference type="DMDM" id="74728154"/>
<dbReference type="jPOST" id="Q8IW92"/>
<dbReference type="MassIVE" id="Q8IW92"/>
<dbReference type="PaxDb" id="9606-ENSP00000444628"/>
<dbReference type="PeptideAtlas" id="Q8IW92"/>
<dbReference type="ProteomicsDB" id="70822"/>
<dbReference type="Pumba" id="Q8IW92"/>
<dbReference type="Antibodypedia" id="53678">
    <property type="antibodies" value="90 antibodies from 15 providers"/>
</dbReference>
<dbReference type="DNASU" id="89944"/>
<dbReference type="Ensembl" id="ENST00000535456.7">
    <property type="protein sequence ID" value="ENSP00000444628.1"/>
    <property type="gene ID" value="ENSG00000149328.16"/>
</dbReference>
<dbReference type="GeneID" id="89944"/>
<dbReference type="KEGG" id="hsa:89944"/>
<dbReference type="MANE-Select" id="ENST00000535456.7">
    <property type="protein sequence ID" value="ENSP00000444628.1"/>
    <property type="RefSeq nucleotide sequence ID" value="NM_001370461.1"/>
    <property type="RefSeq protein sequence ID" value="NP_001357390.1"/>
</dbReference>
<dbReference type="UCSC" id="uc001qhp.3">
    <property type="organism name" value="human"/>
</dbReference>
<dbReference type="AGR" id="HGNC:25129"/>
<dbReference type="CTD" id="89944"/>
<dbReference type="DisGeNET" id="89944"/>
<dbReference type="GeneCards" id="GLB1L2"/>
<dbReference type="HGNC" id="HGNC:25129">
    <property type="gene designation" value="GLB1L2"/>
</dbReference>
<dbReference type="HPA" id="ENSG00000149328">
    <property type="expression patterns" value="Tissue enhanced (retina)"/>
</dbReference>
<dbReference type="neXtProt" id="NX_Q8IW92"/>
<dbReference type="OpenTargets" id="ENSG00000149328"/>
<dbReference type="PharmGKB" id="PA162389761"/>
<dbReference type="VEuPathDB" id="HostDB:ENSG00000149328"/>
<dbReference type="eggNOG" id="KOG0496">
    <property type="taxonomic scope" value="Eukaryota"/>
</dbReference>
<dbReference type="GeneTree" id="ENSGT00950000182942"/>
<dbReference type="HOGENOM" id="CLU_007853_7_2_1"/>
<dbReference type="InParanoid" id="Q8IW92"/>
<dbReference type="OMA" id="GSEIVHN"/>
<dbReference type="OrthoDB" id="1657402at2759"/>
<dbReference type="PAN-GO" id="Q8IW92">
    <property type="GO annotations" value="2 GO annotations based on evolutionary models"/>
</dbReference>
<dbReference type="PhylomeDB" id="Q8IW92"/>
<dbReference type="TreeFam" id="TF354299"/>
<dbReference type="PathwayCommons" id="Q8IW92"/>
<dbReference type="Reactome" id="R-HSA-2022857">
    <property type="pathway name" value="Keratan sulfate degradation"/>
</dbReference>
<dbReference type="Reactome" id="R-HSA-2024096">
    <property type="pathway name" value="HS-GAG degradation"/>
</dbReference>
<dbReference type="Reactome" id="R-HSA-9840310">
    <property type="pathway name" value="Glycosphingolipid catabolism"/>
</dbReference>
<dbReference type="SignaLink" id="Q8IW92"/>
<dbReference type="BioGRID-ORCS" id="89944">
    <property type="hits" value="11 hits in 1151 CRISPR screens"/>
</dbReference>
<dbReference type="ChiTaRS" id="GLB1L2">
    <property type="organism name" value="human"/>
</dbReference>
<dbReference type="GenomeRNAi" id="89944"/>
<dbReference type="Pharos" id="Q8IW92">
    <property type="development level" value="Tdark"/>
</dbReference>
<dbReference type="PRO" id="PR:Q8IW92"/>
<dbReference type="Proteomes" id="UP000005640">
    <property type="component" value="Chromosome 11"/>
</dbReference>
<dbReference type="RNAct" id="Q8IW92">
    <property type="molecule type" value="protein"/>
</dbReference>
<dbReference type="Bgee" id="ENSG00000149328">
    <property type="expression patterns" value="Expressed in right uterine tube and 117 other cell types or tissues"/>
</dbReference>
<dbReference type="ExpressionAtlas" id="Q8IW92">
    <property type="expression patterns" value="baseline and differential"/>
</dbReference>
<dbReference type="GO" id="GO:0005576">
    <property type="term" value="C:extracellular region"/>
    <property type="evidence" value="ECO:0007669"/>
    <property type="project" value="UniProtKB-SubCell"/>
</dbReference>
<dbReference type="GO" id="GO:0005773">
    <property type="term" value="C:vacuole"/>
    <property type="evidence" value="ECO:0000318"/>
    <property type="project" value="GO_Central"/>
</dbReference>
<dbReference type="GO" id="GO:0004565">
    <property type="term" value="F:beta-galactosidase activity"/>
    <property type="evidence" value="ECO:0000318"/>
    <property type="project" value="GO_Central"/>
</dbReference>
<dbReference type="GO" id="GO:0019388">
    <property type="term" value="P:galactose catabolic process"/>
    <property type="evidence" value="ECO:0000318"/>
    <property type="project" value="GO_Central"/>
</dbReference>
<dbReference type="FunFam" id="2.60.120.260:FF:000049">
    <property type="entry name" value="Beta-galactosidase"/>
    <property type="match status" value="1"/>
</dbReference>
<dbReference type="FunFam" id="2.60.120.260:FF:000293">
    <property type="entry name" value="Beta-galactosidase"/>
    <property type="match status" value="1"/>
</dbReference>
<dbReference type="FunFam" id="3.20.20.80:FF:000036">
    <property type="entry name" value="Beta-galactosidase"/>
    <property type="match status" value="1"/>
</dbReference>
<dbReference type="Gene3D" id="2.60.120.260">
    <property type="entry name" value="Galactose-binding domain-like"/>
    <property type="match status" value="2"/>
</dbReference>
<dbReference type="Gene3D" id="3.20.20.80">
    <property type="entry name" value="Glycosidases"/>
    <property type="match status" value="1"/>
</dbReference>
<dbReference type="InterPro" id="IPR026283">
    <property type="entry name" value="B-gal_1-like"/>
</dbReference>
<dbReference type="InterPro" id="IPR048912">
    <property type="entry name" value="BetaGal1-like_ABD1"/>
</dbReference>
<dbReference type="InterPro" id="IPR048913">
    <property type="entry name" value="BetaGal_gal-bd"/>
</dbReference>
<dbReference type="InterPro" id="IPR008979">
    <property type="entry name" value="Galactose-bd-like_sf"/>
</dbReference>
<dbReference type="InterPro" id="IPR031330">
    <property type="entry name" value="Gly_Hdrlase_35_cat"/>
</dbReference>
<dbReference type="InterPro" id="IPR019801">
    <property type="entry name" value="Glyco_hydro_35_CS"/>
</dbReference>
<dbReference type="InterPro" id="IPR001944">
    <property type="entry name" value="Glycoside_Hdrlase_35"/>
</dbReference>
<dbReference type="InterPro" id="IPR017853">
    <property type="entry name" value="Glycoside_hydrolase_SF"/>
</dbReference>
<dbReference type="PANTHER" id="PTHR23421">
    <property type="entry name" value="BETA-GALACTOSIDASE RELATED"/>
    <property type="match status" value="1"/>
</dbReference>
<dbReference type="Pfam" id="PF21317">
    <property type="entry name" value="BetaGal_ABD_1"/>
    <property type="match status" value="1"/>
</dbReference>
<dbReference type="Pfam" id="PF21467">
    <property type="entry name" value="BetaGal_gal-bd"/>
    <property type="match status" value="1"/>
</dbReference>
<dbReference type="Pfam" id="PF01301">
    <property type="entry name" value="Glyco_hydro_35"/>
    <property type="match status" value="1"/>
</dbReference>
<dbReference type="PIRSF" id="PIRSF006336">
    <property type="entry name" value="B-gal"/>
    <property type="match status" value="1"/>
</dbReference>
<dbReference type="PRINTS" id="PR00742">
    <property type="entry name" value="GLHYDRLASE35"/>
</dbReference>
<dbReference type="SUPFAM" id="SSF51445">
    <property type="entry name" value="(Trans)glycosidases"/>
    <property type="match status" value="1"/>
</dbReference>
<dbReference type="SUPFAM" id="SSF49785">
    <property type="entry name" value="Galactose-binding domain-like"/>
    <property type="match status" value="1"/>
</dbReference>
<dbReference type="PROSITE" id="PS01182">
    <property type="entry name" value="GLYCOSYL_HYDROL_F35"/>
    <property type="match status" value="1"/>
</dbReference>
<accession>Q8IW92</accession>
<accession>A6NCE6</accession>
<accession>Q6UX60</accession>
<accession>Q8NC62</accession>
<accession>Q8NCB3</accession>
<accession>Q8NCJ1</accession>
<accession>Q96HP3</accession>
<keyword id="KW-0326">Glycosidase</keyword>
<keyword id="KW-0378">Hydrolase</keyword>
<keyword id="KW-1267">Proteomics identification</keyword>
<keyword id="KW-1185">Reference proteome</keyword>
<keyword id="KW-0964">Secreted</keyword>
<keyword id="KW-0732">Signal</keyword>
<organism>
    <name type="scientific">Homo sapiens</name>
    <name type="common">Human</name>
    <dbReference type="NCBI Taxonomy" id="9606"/>
    <lineage>
        <taxon>Eukaryota</taxon>
        <taxon>Metazoa</taxon>
        <taxon>Chordata</taxon>
        <taxon>Craniata</taxon>
        <taxon>Vertebrata</taxon>
        <taxon>Euteleostomi</taxon>
        <taxon>Mammalia</taxon>
        <taxon>Eutheria</taxon>
        <taxon>Euarchontoglires</taxon>
        <taxon>Primates</taxon>
        <taxon>Haplorrhini</taxon>
        <taxon>Catarrhini</taxon>
        <taxon>Hominidae</taxon>
        <taxon>Homo</taxon>
    </lineage>
</organism>
<proteinExistence type="evidence at protein level"/>
<protein>
    <recommendedName>
        <fullName>Beta-galactosidase-1-like protein 2</fullName>
        <ecNumber>3.2.1.-</ecNumber>
    </recommendedName>
</protein>
<reference key="1">
    <citation type="journal article" date="2003" name="Genome Res.">
        <title>The secreted protein discovery initiative (SPDI), a large-scale effort to identify novel human secreted and transmembrane proteins: a bioinformatics assessment.</title>
        <authorList>
            <person name="Clark H.F."/>
            <person name="Gurney A.L."/>
            <person name="Abaya E."/>
            <person name="Baker K."/>
            <person name="Baldwin D.T."/>
            <person name="Brush J."/>
            <person name="Chen J."/>
            <person name="Chow B."/>
            <person name="Chui C."/>
            <person name="Crowley C."/>
            <person name="Currell B."/>
            <person name="Deuel B."/>
            <person name="Dowd P."/>
            <person name="Eaton D."/>
            <person name="Foster J.S."/>
            <person name="Grimaldi C."/>
            <person name="Gu Q."/>
            <person name="Hass P.E."/>
            <person name="Heldens S."/>
            <person name="Huang A."/>
            <person name="Kim H.S."/>
            <person name="Klimowski L."/>
            <person name="Jin Y."/>
            <person name="Johnson S."/>
            <person name="Lee J."/>
            <person name="Lewis L."/>
            <person name="Liao D."/>
            <person name="Mark M.R."/>
            <person name="Robbie E."/>
            <person name="Sanchez C."/>
            <person name="Schoenfeld J."/>
            <person name="Seshagiri S."/>
            <person name="Simmons L."/>
            <person name="Singh J."/>
            <person name="Smith V."/>
            <person name="Stinson J."/>
            <person name="Vagts A."/>
            <person name="Vandlen R.L."/>
            <person name="Watanabe C."/>
            <person name="Wieand D."/>
            <person name="Woods K."/>
            <person name="Xie M.-H."/>
            <person name="Yansura D.G."/>
            <person name="Yi S."/>
            <person name="Yu G."/>
            <person name="Yuan J."/>
            <person name="Zhang M."/>
            <person name="Zhang Z."/>
            <person name="Goddard A.D."/>
            <person name="Wood W.I."/>
            <person name="Godowski P.J."/>
            <person name="Gray A.M."/>
        </authorList>
    </citation>
    <scope>NUCLEOTIDE SEQUENCE [LARGE SCALE MRNA]</scope>
</reference>
<reference key="2">
    <citation type="journal article" date="2004" name="Nat. Genet.">
        <title>Complete sequencing and characterization of 21,243 full-length human cDNAs.</title>
        <authorList>
            <person name="Ota T."/>
            <person name="Suzuki Y."/>
            <person name="Nishikawa T."/>
            <person name="Otsuki T."/>
            <person name="Sugiyama T."/>
            <person name="Irie R."/>
            <person name="Wakamatsu A."/>
            <person name="Hayashi K."/>
            <person name="Sato H."/>
            <person name="Nagai K."/>
            <person name="Kimura K."/>
            <person name="Makita H."/>
            <person name="Sekine M."/>
            <person name="Obayashi M."/>
            <person name="Nishi T."/>
            <person name="Shibahara T."/>
            <person name="Tanaka T."/>
            <person name="Ishii S."/>
            <person name="Yamamoto J."/>
            <person name="Saito K."/>
            <person name="Kawai Y."/>
            <person name="Isono Y."/>
            <person name="Nakamura Y."/>
            <person name="Nagahari K."/>
            <person name="Murakami K."/>
            <person name="Yasuda T."/>
            <person name="Iwayanagi T."/>
            <person name="Wagatsuma M."/>
            <person name="Shiratori A."/>
            <person name="Sudo H."/>
            <person name="Hosoiri T."/>
            <person name="Kaku Y."/>
            <person name="Kodaira H."/>
            <person name="Kondo H."/>
            <person name="Sugawara M."/>
            <person name="Takahashi M."/>
            <person name="Kanda K."/>
            <person name="Yokoi T."/>
            <person name="Furuya T."/>
            <person name="Kikkawa E."/>
            <person name="Omura Y."/>
            <person name="Abe K."/>
            <person name="Kamihara K."/>
            <person name="Katsuta N."/>
            <person name="Sato K."/>
            <person name="Tanikawa M."/>
            <person name="Yamazaki M."/>
            <person name="Ninomiya K."/>
            <person name="Ishibashi T."/>
            <person name="Yamashita H."/>
            <person name="Murakawa K."/>
            <person name="Fujimori K."/>
            <person name="Tanai H."/>
            <person name="Kimata M."/>
            <person name="Watanabe M."/>
            <person name="Hiraoka S."/>
            <person name="Chiba Y."/>
            <person name="Ishida S."/>
            <person name="Ono Y."/>
            <person name="Takiguchi S."/>
            <person name="Watanabe S."/>
            <person name="Yosida M."/>
            <person name="Hotuta T."/>
            <person name="Kusano J."/>
            <person name="Kanehori K."/>
            <person name="Takahashi-Fujii A."/>
            <person name="Hara H."/>
            <person name="Tanase T.-O."/>
            <person name="Nomura Y."/>
            <person name="Togiya S."/>
            <person name="Komai F."/>
            <person name="Hara R."/>
            <person name="Takeuchi K."/>
            <person name="Arita M."/>
            <person name="Imose N."/>
            <person name="Musashino K."/>
            <person name="Yuuki H."/>
            <person name="Oshima A."/>
            <person name="Sasaki N."/>
            <person name="Aotsuka S."/>
            <person name="Yoshikawa Y."/>
            <person name="Matsunawa H."/>
            <person name="Ichihara T."/>
            <person name="Shiohata N."/>
            <person name="Sano S."/>
            <person name="Moriya S."/>
            <person name="Momiyama H."/>
            <person name="Satoh N."/>
            <person name="Takami S."/>
            <person name="Terashima Y."/>
            <person name="Suzuki O."/>
            <person name="Nakagawa S."/>
            <person name="Senoh A."/>
            <person name="Mizoguchi H."/>
            <person name="Goto Y."/>
            <person name="Shimizu F."/>
            <person name="Wakebe H."/>
            <person name="Hishigaki H."/>
            <person name="Watanabe T."/>
            <person name="Sugiyama A."/>
            <person name="Takemoto M."/>
            <person name="Kawakami B."/>
            <person name="Yamazaki M."/>
            <person name="Watanabe K."/>
            <person name="Kumagai A."/>
            <person name="Itakura S."/>
            <person name="Fukuzumi Y."/>
            <person name="Fujimori Y."/>
            <person name="Komiyama M."/>
            <person name="Tashiro H."/>
            <person name="Tanigami A."/>
            <person name="Fujiwara T."/>
            <person name="Ono T."/>
            <person name="Yamada K."/>
            <person name="Fujii Y."/>
            <person name="Ozaki K."/>
            <person name="Hirao M."/>
            <person name="Ohmori Y."/>
            <person name="Kawabata A."/>
            <person name="Hikiji T."/>
            <person name="Kobatake N."/>
            <person name="Inagaki H."/>
            <person name="Ikema Y."/>
            <person name="Okamoto S."/>
            <person name="Okitani R."/>
            <person name="Kawakami T."/>
            <person name="Noguchi S."/>
            <person name="Itoh T."/>
            <person name="Shigeta K."/>
            <person name="Senba T."/>
            <person name="Matsumura K."/>
            <person name="Nakajima Y."/>
            <person name="Mizuno T."/>
            <person name="Morinaga M."/>
            <person name="Sasaki M."/>
            <person name="Togashi T."/>
            <person name="Oyama M."/>
            <person name="Hata H."/>
            <person name="Watanabe M."/>
            <person name="Komatsu T."/>
            <person name="Mizushima-Sugano J."/>
            <person name="Satoh T."/>
            <person name="Shirai Y."/>
            <person name="Takahashi Y."/>
            <person name="Nakagawa K."/>
            <person name="Okumura K."/>
            <person name="Nagase T."/>
            <person name="Nomura N."/>
            <person name="Kikuchi H."/>
            <person name="Masuho Y."/>
            <person name="Yamashita R."/>
            <person name="Nakai K."/>
            <person name="Yada T."/>
            <person name="Nakamura Y."/>
            <person name="Ohara O."/>
            <person name="Isogai T."/>
            <person name="Sugano S."/>
        </authorList>
    </citation>
    <scope>NUCLEOTIDE SEQUENCE [LARGE SCALE MRNA]</scope>
</reference>
<reference key="3">
    <citation type="journal article" date="2005" name="DNA Res.">
        <title>Signal sequence and keyword trap in silico for selection of full-length human cDNAs encoding secretion or membrane proteins from oligo-capped cDNA libraries.</title>
        <authorList>
            <person name="Otsuki T."/>
            <person name="Ota T."/>
            <person name="Nishikawa T."/>
            <person name="Hayashi K."/>
            <person name="Suzuki Y."/>
            <person name="Yamamoto J."/>
            <person name="Wakamatsu A."/>
            <person name="Kimura K."/>
            <person name="Sakamoto K."/>
            <person name="Hatano N."/>
            <person name="Kawai Y."/>
            <person name="Ishii S."/>
            <person name="Saito K."/>
            <person name="Kojima S."/>
            <person name="Sugiyama T."/>
            <person name="Ono T."/>
            <person name="Okano K."/>
            <person name="Yoshikawa Y."/>
            <person name="Aotsuka S."/>
            <person name="Sasaki N."/>
            <person name="Hattori A."/>
            <person name="Okumura K."/>
            <person name="Nagai K."/>
            <person name="Sugano S."/>
            <person name="Isogai T."/>
        </authorList>
    </citation>
    <scope>NUCLEOTIDE SEQUENCE [LARGE SCALE MRNA]</scope>
</reference>
<reference key="4">
    <citation type="journal article" date="2006" name="Nature">
        <title>Human chromosome 11 DNA sequence and analysis including novel gene identification.</title>
        <authorList>
            <person name="Taylor T.D."/>
            <person name="Noguchi H."/>
            <person name="Totoki Y."/>
            <person name="Toyoda A."/>
            <person name="Kuroki Y."/>
            <person name="Dewar K."/>
            <person name="Lloyd C."/>
            <person name="Itoh T."/>
            <person name="Takeda T."/>
            <person name="Kim D.-W."/>
            <person name="She X."/>
            <person name="Barlow K.F."/>
            <person name="Bloom T."/>
            <person name="Bruford E."/>
            <person name="Chang J.L."/>
            <person name="Cuomo C.A."/>
            <person name="Eichler E."/>
            <person name="FitzGerald M.G."/>
            <person name="Jaffe D.B."/>
            <person name="LaButti K."/>
            <person name="Nicol R."/>
            <person name="Park H.-S."/>
            <person name="Seaman C."/>
            <person name="Sougnez C."/>
            <person name="Yang X."/>
            <person name="Zimmer A.R."/>
            <person name="Zody M.C."/>
            <person name="Birren B.W."/>
            <person name="Nusbaum C."/>
            <person name="Fujiyama A."/>
            <person name="Hattori M."/>
            <person name="Rogers J."/>
            <person name="Lander E.S."/>
            <person name="Sakaki Y."/>
        </authorList>
    </citation>
    <scope>NUCLEOTIDE SEQUENCE [LARGE SCALE GENOMIC DNA]</scope>
</reference>
<reference key="5">
    <citation type="submission" date="2005-07" db="EMBL/GenBank/DDBJ databases">
        <authorList>
            <person name="Mural R.J."/>
            <person name="Istrail S."/>
            <person name="Sutton G.G."/>
            <person name="Florea L."/>
            <person name="Halpern A.L."/>
            <person name="Mobarry C.M."/>
            <person name="Lippert R."/>
            <person name="Walenz B."/>
            <person name="Shatkay H."/>
            <person name="Dew I."/>
            <person name="Miller J.R."/>
            <person name="Flanigan M.J."/>
            <person name="Edwards N.J."/>
            <person name="Bolanos R."/>
            <person name="Fasulo D."/>
            <person name="Halldorsson B.V."/>
            <person name="Hannenhalli S."/>
            <person name="Turner R."/>
            <person name="Yooseph S."/>
            <person name="Lu F."/>
            <person name="Nusskern D.R."/>
            <person name="Shue B.C."/>
            <person name="Zheng X.H."/>
            <person name="Zhong F."/>
            <person name="Delcher A.L."/>
            <person name="Huson D.H."/>
            <person name="Kravitz S.A."/>
            <person name="Mouchard L."/>
            <person name="Reinert K."/>
            <person name="Remington K.A."/>
            <person name="Clark A.G."/>
            <person name="Waterman M.S."/>
            <person name="Eichler E.E."/>
            <person name="Adams M.D."/>
            <person name="Hunkapiller M.W."/>
            <person name="Myers E.W."/>
            <person name="Venter J.C."/>
        </authorList>
    </citation>
    <scope>NUCLEOTIDE SEQUENCE [LARGE SCALE GENOMIC DNA]</scope>
</reference>
<reference key="6">
    <citation type="journal article" date="2004" name="Genome Res.">
        <title>The status, quality, and expansion of the NIH full-length cDNA project: the Mammalian Gene Collection (MGC).</title>
        <authorList>
            <consortium name="The MGC Project Team"/>
        </authorList>
    </citation>
    <scope>NUCLEOTIDE SEQUENCE [LARGE SCALE MRNA]</scope>
    <source>
        <tissue>Colon</tissue>
    </source>
</reference>
<reference key="7">
    <citation type="submission" date="1999-08" db="EMBL/GenBank/DDBJ databases">
        <title>Homo sapiens normal aorta mRNA MST114.</title>
        <authorList>
            <person name="Liu B."/>
            <person name="Zhao B."/>
            <person name="Wang X.Y."/>
            <person name="Liu Y.Q."/>
            <person name="Sheng H."/>
            <person name="Qin B.M."/>
            <person name="Zhang Q."/>
            <person name="Zheng W.Y."/>
            <person name="Xu H.S."/>
            <person name="Liu B.H."/>
            <person name="Lu H."/>
            <person name="Gong Q."/>
            <person name="Hui R.T."/>
        </authorList>
    </citation>
    <scope>NUCLEOTIDE SEQUENCE [LARGE SCALE MRNA] OF 63-636</scope>
    <source>
        <tissue>Aorta</tissue>
    </source>
</reference>
<evidence type="ECO:0000250" key="1"/>
<evidence type="ECO:0000255" key="2"/>
<evidence type="ECO:0000305" key="3"/>
<gene>
    <name type="primary">GLB1L2</name>
    <name type="ORF">MSTP014</name>
    <name type="ORF">UNQ210/PRO236</name>
</gene>